<reference key="1">
    <citation type="journal article" date="1998" name="Nature">
        <title>Deciphering the biology of Mycobacterium tuberculosis from the complete genome sequence.</title>
        <authorList>
            <person name="Cole S.T."/>
            <person name="Brosch R."/>
            <person name="Parkhill J."/>
            <person name="Garnier T."/>
            <person name="Churcher C.M."/>
            <person name="Harris D.E."/>
            <person name="Gordon S.V."/>
            <person name="Eiglmeier K."/>
            <person name="Gas S."/>
            <person name="Barry C.E. III"/>
            <person name="Tekaia F."/>
            <person name="Badcock K."/>
            <person name="Basham D."/>
            <person name="Brown D."/>
            <person name="Chillingworth T."/>
            <person name="Connor R."/>
            <person name="Davies R.M."/>
            <person name="Devlin K."/>
            <person name="Feltwell T."/>
            <person name="Gentles S."/>
            <person name="Hamlin N."/>
            <person name="Holroyd S."/>
            <person name="Hornsby T."/>
            <person name="Jagels K."/>
            <person name="Krogh A."/>
            <person name="McLean J."/>
            <person name="Moule S."/>
            <person name="Murphy L.D."/>
            <person name="Oliver S."/>
            <person name="Osborne J."/>
            <person name="Quail M.A."/>
            <person name="Rajandream M.A."/>
            <person name="Rogers J."/>
            <person name="Rutter S."/>
            <person name="Seeger K."/>
            <person name="Skelton S."/>
            <person name="Squares S."/>
            <person name="Squares R."/>
            <person name="Sulston J.E."/>
            <person name="Taylor K."/>
            <person name="Whitehead S."/>
            <person name="Barrell B.G."/>
        </authorList>
    </citation>
    <scope>NUCLEOTIDE SEQUENCE [LARGE SCALE GENOMIC DNA]</scope>
    <source>
        <strain>ATCC 25618 / H37Rv</strain>
    </source>
</reference>
<reference key="2">
    <citation type="journal article" date="2008" name="BMC Syst. Biol.">
        <title>targetTB: a target identification pipeline for Mycobacterium tuberculosis through an interactome, reactome and genome-scale structural analysis.</title>
        <authorList>
            <person name="Raman K."/>
            <person name="Yeturu K."/>
            <person name="Chandra N."/>
        </authorList>
    </citation>
    <scope>IDENTIFICATION AS A DRUG TARGET [LARGE SCALE ANALYSIS]</scope>
</reference>
<reference key="3">
    <citation type="journal article" date="2011" name="Mol. Cell. Proteomics">
        <title>Proteogenomic analysis of Mycobacterium tuberculosis by high resolution mass spectrometry.</title>
        <authorList>
            <person name="Kelkar D.S."/>
            <person name="Kumar D."/>
            <person name="Kumar P."/>
            <person name="Balakrishnan L."/>
            <person name="Muthusamy B."/>
            <person name="Yadav A.K."/>
            <person name="Shrivastava P."/>
            <person name="Marimuthu A."/>
            <person name="Anand S."/>
            <person name="Sundaram H."/>
            <person name="Kingsbury R."/>
            <person name="Harsha H.C."/>
            <person name="Nair B."/>
            <person name="Prasad T.S."/>
            <person name="Chauhan D.S."/>
            <person name="Katoch K."/>
            <person name="Katoch V.M."/>
            <person name="Kumar P."/>
            <person name="Chaerkady R."/>
            <person name="Ramachandran S."/>
            <person name="Dash D."/>
            <person name="Pandey A."/>
        </authorList>
    </citation>
    <scope>IDENTIFICATION BY MASS SPECTROMETRY [LARGE SCALE ANALYSIS]</scope>
    <source>
        <strain>ATCC 25618 / H37Rv</strain>
    </source>
</reference>
<protein>
    <recommendedName>
        <fullName>D-3-phosphoglycerate dehydrogenase</fullName>
        <shortName>PGDH</shortName>
        <ecNumber evidence="2">1.1.1.95</ecNumber>
    </recommendedName>
    <alternativeName>
        <fullName evidence="2">2-oxoglutarate reductase</fullName>
        <ecNumber evidence="2">1.1.1.399</ecNumber>
    </alternativeName>
</protein>
<comment type="function">
    <text evidence="2">Catalyzes the reversible oxidation of 3-phospho-D-glycerate to 3-phosphonooxypyruvate, the first step of the phosphorylated L-serine biosynthesis pathway. Also catalyzes the reversible oxidation of 2-hydroxyglutarate to 2-oxoglutarate.</text>
</comment>
<comment type="catalytic activity">
    <reaction evidence="2">
        <text>(2R)-3-phosphoglycerate + NAD(+) = 3-phosphooxypyruvate + NADH + H(+)</text>
        <dbReference type="Rhea" id="RHEA:12641"/>
        <dbReference type="ChEBI" id="CHEBI:15378"/>
        <dbReference type="ChEBI" id="CHEBI:18110"/>
        <dbReference type="ChEBI" id="CHEBI:57540"/>
        <dbReference type="ChEBI" id="CHEBI:57945"/>
        <dbReference type="ChEBI" id="CHEBI:58272"/>
        <dbReference type="EC" id="1.1.1.95"/>
    </reaction>
</comment>
<comment type="catalytic activity">
    <reaction evidence="2">
        <text>(R)-2-hydroxyglutarate + NAD(+) = 2-oxoglutarate + NADH + H(+)</text>
        <dbReference type="Rhea" id="RHEA:49612"/>
        <dbReference type="ChEBI" id="CHEBI:15378"/>
        <dbReference type="ChEBI" id="CHEBI:15801"/>
        <dbReference type="ChEBI" id="CHEBI:16810"/>
        <dbReference type="ChEBI" id="CHEBI:57540"/>
        <dbReference type="ChEBI" id="CHEBI:57945"/>
        <dbReference type="EC" id="1.1.1.399"/>
    </reaction>
</comment>
<comment type="pathway">
    <text>Amino-acid biosynthesis; L-serine biosynthesis; L-serine from 3-phospho-D-glycerate: step 1/3.</text>
</comment>
<comment type="miscellaneous">
    <text>Was identified as a high-confidence drug target.</text>
</comment>
<comment type="similarity">
    <text evidence="4">Belongs to the D-isomer specific 2-hydroxyacid dehydrogenase family.</text>
</comment>
<organism>
    <name type="scientific">Mycobacterium tuberculosis (strain ATCC 25618 / H37Rv)</name>
    <dbReference type="NCBI Taxonomy" id="83332"/>
    <lineage>
        <taxon>Bacteria</taxon>
        <taxon>Bacillati</taxon>
        <taxon>Actinomycetota</taxon>
        <taxon>Actinomycetes</taxon>
        <taxon>Mycobacteriales</taxon>
        <taxon>Mycobacteriaceae</taxon>
        <taxon>Mycobacterium</taxon>
        <taxon>Mycobacterium tuberculosis complex</taxon>
    </lineage>
</organism>
<sequence>MSLPVVLIADKLAPSTVAALGDQVEVRWVDGPDRDKLLAAVPEADALLVRSATTVDAEVLAAAPKLKIVARAGVGLDNVDVDAATARGVLVVNAPTSNIHSAAEHALALLLAASRQIPAADASLREHTWKRSSFSGTEIFGKTVGVVGLGRIGQLVAQRIAAFGAYVVAYDPYVSPARAAQLGIELLSLDDLLARADFISVHLPKTPETAGLIDKEALAKTKPGVIIVNAARGGLVDEAALADAITGGHVRAAGLDVFATEPCTDSPLFELAQVVVTPHLGASTAEAQDRAGTDVAESVRLALAGEFVPDAVNVGGGVVNEEVAPWLDLVRKLGVLAGVLSDELPVSLSVQVRGELAAEEVEVLRLSALRGLFSAVIEDAVTFVNAPALAAERGVTAEICKASESPNHRSVVDVRAVGADGSVVTVSGTLYGPQLSQKIVQINGRHFDLRAQGINLIIHYVDRPGALGKIGTLLGTAGVNIQAAQLSEDAEGPGATILLRLDQDVPDDVRTAIAAAVDAYKLEVVDLS</sequence>
<dbReference type="EC" id="1.1.1.95" evidence="2"/>
<dbReference type="EC" id="1.1.1.399" evidence="2"/>
<dbReference type="EMBL" id="AL123456">
    <property type="protein sequence ID" value="CCP45801.1"/>
    <property type="molecule type" value="Genomic_DNA"/>
</dbReference>
<dbReference type="PIR" id="G70854">
    <property type="entry name" value="G70854"/>
</dbReference>
<dbReference type="RefSeq" id="WP_003899578.1">
    <property type="nucleotide sequence ID" value="NZ_NVQJ01000041.1"/>
</dbReference>
<dbReference type="RefSeq" id="YP_177916.1">
    <property type="nucleotide sequence ID" value="NC_000962.3"/>
</dbReference>
<dbReference type="PDB" id="1YGY">
    <property type="method" value="X-ray"/>
    <property type="resolution" value="2.30 A"/>
    <property type="chains" value="A/B=2-528"/>
</dbReference>
<dbReference type="PDB" id="3DC2">
    <property type="method" value="X-ray"/>
    <property type="resolution" value="2.70 A"/>
    <property type="chains" value="A/B=2-528"/>
</dbReference>
<dbReference type="PDB" id="3DDN">
    <property type="method" value="X-ray"/>
    <property type="resolution" value="2.40 A"/>
    <property type="chains" value="A/B=2-528"/>
</dbReference>
<dbReference type="PDBsum" id="1YGY"/>
<dbReference type="PDBsum" id="3DC2"/>
<dbReference type="PDBsum" id="3DDN"/>
<dbReference type="SMR" id="P9WNX3"/>
<dbReference type="FunCoup" id="P9WNX3">
    <property type="interactions" value="436"/>
</dbReference>
<dbReference type="IntAct" id="P9WNX3">
    <property type="interactions" value="1"/>
</dbReference>
<dbReference type="STRING" id="83332.Rv2996c"/>
<dbReference type="DrugBank" id="DB01694">
    <property type="generic name" value="D-tartaric acid"/>
</dbReference>
<dbReference type="PaxDb" id="83332-Rv2996c"/>
<dbReference type="DNASU" id="887154"/>
<dbReference type="GeneID" id="45426986"/>
<dbReference type="GeneID" id="887154"/>
<dbReference type="KEGG" id="mtu:Rv2996c"/>
<dbReference type="KEGG" id="mtv:RVBD_2996c"/>
<dbReference type="TubercuList" id="Rv2996c"/>
<dbReference type="eggNOG" id="COG0111">
    <property type="taxonomic scope" value="Bacteria"/>
</dbReference>
<dbReference type="InParanoid" id="P9WNX3"/>
<dbReference type="OrthoDB" id="9793626at2"/>
<dbReference type="PhylomeDB" id="P9WNX3"/>
<dbReference type="BRENDA" id="1.1.1.95">
    <property type="organism ID" value="3445"/>
</dbReference>
<dbReference type="UniPathway" id="UPA00135">
    <property type="reaction ID" value="UER00196"/>
</dbReference>
<dbReference type="EvolutionaryTrace" id="P9WNX3"/>
<dbReference type="Proteomes" id="UP000001584">
    <property type="component" value="Chromosome"/>
</dbReference>
<dbReference type="GO" id="GO:0009274">
    <property type="term" value="C:peptidoglycan-based cell wall"/>
    <property type="evidence" value="ECO:0007005"/>
    <property type="project" value="MTBBASE"/>
</dbReference>
<dbReference type="GO" id="GO:0005886">
    <property type="term" value="C:plasma membrane"/>
    <property type="evidence" value="ECO:0007005"/>
    <property type="project" value="MTBBASE"/>
</dbReference>
<dbReference type="GO" id="GO:0051287">
    <property type="term" value="F:NAD binding"/>
    <property type="evidence" value="ECO:0007669"/>
    <property type="project" value="InterPro"/>
</dbReference>
<dbReference type="GO" id="GO:0004617">
    <property type="term" value="F:phosphoglycerate dehydrogenase activity"/>
    <property type="evidence" value="ECO:0000314"/>
    <property type="project" value="MTBBASE"/>
</dbReference>
<dbReference type="GO" id="GO:0006564">
    <property type="term" value="P:L-serine biosynthetic process"/>
    <property type="evidence" value="ECO:0000314"/>
    <property type="project" value="MTBBASE"/>
</dbReference>
<dbReference type="CDD" id="cd04902">
    <property type="entry name" value="ACT_3PGDH-xct"/>
    <property type="match status" value="1"/>
</dbReference>
<dbReference type="CDD" id="cd12173">
    <property type="entry name" value="PGDH_4"/>
    <property type="match status" value="1"/>
</dbReference>
<dbReference type="FunFam" id="3.30.1330.90:FF:000009">
    <property type="entry name" value="D-3-phosphoglycerate dehydrogenase"/>
    <property type="match status" value="1"/>
</dbReference>
<dbReference type="FunFam" id="3.30.70.260:FF:000081">
    <property type="entry name" value="D-3-phosphoglycerate dehydrogenase"/>
    <property type="match status" value="1"/>
</dbReference>
<dbReference type="FunFam" id="3.40.50.720:FF:000021">
    <property type="entry name" value="D-3-phosphoglycerate dehydrogenase"/>
    <property type="match status" value="1"/>
</dbReference>
<dbReference type="Gene3D" id="3.30.70.260">
    <property type="match status" value="1"/>
</dbReference>
<dbReference type="Gene3D" id="3.30.1330.90">
    <property type="entry name" value="D-3-phosphoglycerate dehydrogenase, domain 3"/>
    <property type="match status" value="1"/>
</dbReference>
<dbReference type="Gene3D" id="3.40.50.720">
    <property type="entry name" value="NAD(P)-binding Rossmann-like Domain"/>
    <property type="match status" value="2"/>
</dbReference>
<dbReference type="InterPro" id="IPR045865">
    <property type="entry name" value="ACT-like_dom_sf"/>
</dbReference>
<dbReference type="InterPro" id="IPR002912">
    <property type="entry name" value="ACT_dom"/>
</dbReference>
<dbReference type="InterPro" id="IPR029009">
    <property type="entry name" value="ASB_dom_sf"/>
</dbReference>
<dbReference type="InterPro" id="IPR050857">
    <property type="entry name" value="D-2-hydroxyacid_DH"/>
</dbReference>
<dbReference type="InterPro" id="IPR006139">
    <property type="entry name" value="D-isomer_2_OHA_DH_cat_dom"/>
</dbReference>
<dbReference type="InterPro" id="IPR029753">
    <property type="entry name" value="D-isomer_DH_CS"/>
</dbReference>
<dbReference type="InterPro" id="IPR029752">
    <property type="entry name" value="D-isomer_DH_CS1"/>
</dbReference>
<dbReference type="InterPro" id="IPR006140">
    <property type="entry name" value="D-isomer_DH_NAD-bd"/>
</dbReference>
<dbReference type="InterPro" id="IPR036291">
    <property type="entry name" value="NAD(P)-bd_dom_sf"/>
</dbReference>
<dbReference type="InterPro" id="IPR006236">
    <property type="entry name" value="PGDH"/>
</dbReference>
<dbReference type="InterPro" id="IPR045626">
    <property type="entry name" value="PGDH_ASB_dom"/>
</dbReference>
<dbReference type="NCBIfam" id="TIGR01327">
    <property type="entry name" value="PGDH"/>
    <property type="match status" value="1"/>
</dbReference>
<dbReference type="PANTHER" id="PTHR42789">
    <property type="entry name" value="D-ISOMER SPECIFIC 2-HYDROXYACID DEHYDROGENASE FAMILY PROTEIN (AFU_ORTHOLOGUE AFUA_6G10090)"/>
    <property type="match status" value="1"/>
</dbReference>
<dbReference type="PANTHER" id="PTHR42789:SF1">
    <property type="entry name" value="D-ISOMER SPECIFIC 2-HYDROXYACID DEHYDROGENASE FAMILY PROTEIN (AFU_ORTHOLOGUE AFUA_6G10090)"/>
    <property type="match status" value="1"/>
</dbReference>
<dbReference type="Pfam" id="PF00389">
    <property type="entry name" value="2-Hacid_dh"/>
    <property type="match status" value="1"/>
</dbReference>
<dbReference type="Pfam" id="PF02826">
    <property type="entry name" value="2-Hacid_dh_C"/>
    <property type="match status" value="1"/>
</dbReference>
<dbReference type="Pfam" id="PF01842">
    <property type="entry name" value="ACT"/>
    <property type="match status" value="1"/>
</dbReference>
<dbReference type="Pfam" id="PF19304">
    <property type="entry name" value="PGDH_inter"/>
    <property type="match status" value="1"/>
</dbReference>
<dbReference type="SUPFAM" id="SSF55021">
    <property type="entry name" value="ACT-like"/>
    <property type="match status" value="1"/>
</dbReference>
<dbReference type="SUPFAM" id="SSF52283">
    <property type="entry name" value="Formate/glycerate dehydrogenase catalytic domain-like"/>
    <property type="match status" value="1"/>
</dbReference>
<dbReference type="SUPFAM" id="SSF51735">
    <property type="entry name" value="NAD(P)-binding Rossmann-fold domains"/>
    <property type="match status" value="1"/>
</dbReference>
<dbReference type="SUPFAM" id="SSF143548">
    <property type="entry name" value="Serine metabolism enzymes domain"/>
    <property type="match status" value="1"/>
</dbReference>
<dbReference type="PROSITE" id="PS51671">
    <property type="entry name" value="ACT"/>
    <property type="match status" value="1"/>
</dbReference>
<dbReference type="PROSITE" id="PS00065">
    <property type="entry name" value="D_2_HYDROXYACID_DH_1"/>
    <property type="match status" value="1"/>
</dbReference>
<dbReference type="PROSITE" id="PS00670">
    <property type="entry name" value="D_2_HYDROXYACID_DH_2"/>
    <property type="match status" value="1"/>
</dbReference>
<dbReference type="PROSITE" id="PS00671">
    <property type="entry name" value="D_2_HYDROXYACID_DH_3"/>
    <property type="match status" value="1"/>
</dbReference>
<keyword id="KW-0002">3D-structure</keyword>
<keyword id="KW-0028">Amino-acid biosynthesis</keyword>
<keyword id="KW-0520">NAD</keyword>
<keyword id="KW-0560">Oxidoreductase</keyword>
<keyword id="KW-1185">Reference proteome</keyword>
<keyword id="KW-0718">Serine biosynthesis</keyword>
<evidence type="ECO:0000250" key="1"/>
<evidence type="ECO:0000250" key="2">
    <source>
        <dbReference type="UniProtKB" id="P0A9T0"/>
    </source>
</evidence>
<evidence type="ECO:0000255" key="3">
    <source>
        <dbReference type="PROSITE-ProRule" id="PRU01007"/>
    </source>
</evidence>
<evidence type="ECO:0000305" key="4"/>
<evidence type="ECO:0007829" key="5">
    <source>
        <dbReference type="PDB" id="1YGY"/>
    </source>
</evidence>
<evidence type="ECO:0007829" key="6">
    <source>
        <dbReference type="PDB" id="3DDN"/>
    </source>
</evidence>
<proteinExistence type="evidence at protein level"/>
<accession>P9WNX3</accession>
<accession>L0TBH1</accession>
<accession>O53243</accession>
<accession>P0A544</accession>
<gene>
    <name type="primary">serA</name>
    <name type="ordered locus">Rv2996c</name>
    <name type="ORF">MTV012.10</name>
</gene>
<feature type="chain" id="PRO_0000076005" description="D-3-phosphoglycerate dehydrogenase">
    <location>
        <begin position="1"/>
        <end position="528"/>
    </location>
</feature>
<feature type="domain" description="ACT" evidence="3">
    <location>
        <begin position="455"/>
        <end position="527"/>
    </location>
</feature>
<feature type="active site" evidence="1">
    <location>
        <position position="232"/>
    </location>
</feature>
<feature type="active site" evidence="1">
    <location>
        <position position="261"/>
    </location>
</feature>
<feature type="active site" description="Proton donor" evidence="1">
    <location>
        <position position="279"/>
    </location>
</feature>
<feature type="binding site" evidence="2">
    <location>
        <begin position="151"/>
        <end position="152"/>
    </location>
    <ligand>
        <name>NAD(+)</name>
        <dbReference type="ChEBI" id="CHEBI:57540"/>
    </ligand>
</feature>
<feature type="binding site" evidence="2">
    <location>
        <position position="171"/>
    </location>
    <ligand>
        <name>NAD(+)</name>
        <dbReference type="ChEBI" id="CHEBI:57540"/>
    </ligand>
</feature>
<feature type="binding site" evidence="2">
    <location>
        <begin position="230"/>
        <end position="232"/>
    </location>
    <ligand>
        <name>NAD(+)</name>
        <dbReference type="ChEBI" id="CHEBI:57540"/>
    </ligand>
</feature>
<feature type="binding site" evidence="2">
    <location>
        <position position="256"/>
    </location>
    <ligand>
        <name>NAD(+)</name>
        <dbReference type="ChEBI" id="CHEBI:57540"/>
    </ligand>
</feature>
<feature type="binding site" evidence="2">
    <location>
        <begin position="279"/>
        <end position="282"/>
    </location>
    <ligand>
        <name>NAD(+)</name>
        <dbReference type="ChEBI" id="CHEBI:57540"/>
    </ligand>
</feature>
<feature type="strand" evidence="5">
    <location>
        <begin position="5"/>
        <end position="8"/>
    </location>
</feature>
<feature type="helix" evidence="5">
    <location>
        <begin position="14"/>
        <end position="17"/>
    </location>
</feature>
<feature type="strand" evidence="5">
    <location>
        <begin position="22"/>
        <end position="28"/>
    </location>
</feature>
<feature type="helix" evidence="5">
    <location>
        <begin position="34"/>
        <end position="40"/>
    </location>
</feature>
<feature type="helix" evidence="5">
    <location>
        <begin position="41"/>
        <end position="43"/>
    </location>
</feature>
<feature type="strand" evidence="5">
    <location>
        <begin position="45"/>
        <end position="49"/>
    </location>
</feature>
<feature type="strand" evidence="5">
    <location>
        <begin position="51"/>
        <end position="53"/>
    </location>
</feature>
<feature type="helix" evidence="5">
    <location>
        <begin position="57"/>
        <end position="61"/>
    </location>
</feature>
<feature type="strand" evidence="5">
    <location>
        <begin position="68"/>
        <end position="74"/>
    </location>
</feature>
<feature type="helix" evidence="5">
    <location>
        <begin position="81"/>
        <end position="86"/>
    </location>
</feature>
<feature type="strand" evidence="5">
    <location>
        <begin position="90"/>
        <end position="92"/>
    </location>
</feature>
<feature type="turn" evidence="6">
    <location>
        <begin position="95"/>
        <end position="98"/>
    </location>
</feature>
<feature type="helix" evidence="5">
    <location>
        <begin position="99"/>
        <end position="114"/>
    </location>
</feature>
<feature type="helix" evidence="5">
    <location>
        <begin position="117"/>
        <end position="125"/>
    </location>
</feature>
<feature type="helix" evidence="5">
    <location>
        <begin position="131"/>
        <end position="133"/>
    </location>
</feature>
<feature type="strand" evidence="5">
    <location>
        <begin position="143"/>
        <end position="147"/>
    </location>
</feature>
<feature type="helix" evidence="5">
    <location>
        <begin position="151"/>
        <end position="161"/>
    </location>
</feature>
<feature type="turn" evidence="5">
    <location>
        <begin position="162"/>
        <end position="164"/>
    </location>
</feature>
<feature type="strand" evidence="5">
    <location>
        <begin position="166"/>
        <end position="170"/>
    </location>
</feature>
<feature type="helix" evidence="5">
    <location>
        <begin position="176"/>
        <end position="182"/>
    </location>
</feature>
<feature type="helix" evidence="5">
    <location>
        <begin position="189"/>
        <end position="195"/>
    </location>
</feature>
<feature type="strand" evidence="5">
    <location>
        <begin position="197"/>
        <end position="201"/>
    </location>
</feature>
<feature type="turn" evidence="5">
    <location>
        <begin position="207"/>
        <end position="211"/>
    </location>
</feature>
<feature type="helix" evidence="5">
    <location>
        <begin position="215"/>
        <end position="218"/>
    </location>
</feature>
<feature type="strand" evidence="5">
    <location>
        <begin position="226"/>
        <end position="229"/>
    </location>
</feature>
<feature type="helix" evidence="5">
    <location>
        <begin position="238"/>
        <end position="246"/>
    </location>
</feature>
<feature type="strand" evidence="5">
    <location>
        <begin position="248"/>
        <end position="250"/>
    </location>
</feature>
<feature type="strand" evidence="5">
    <location>
        <begin position="252"/>
        <end position="257"/>
    </location>
</feature>
<feature type="strand" evidence="5">
    <location>
        <begin position="259"/>
        <end position="262"/>
    </location>
</feature>
<feature type="helix" evidence="5">
    <location>
        <begin position="267"/>
        <end position="270"/>
    </location>
</feature>
<feature type="strand" evidence="5">
    <location>
        <begin position="274"/>
        <end position="276"/>
    </location>
</feature>
<feature type="helix" evidence="5">
    <location>
        <begin position="285"/>
        <end position="303"/>
    </location>
</feature>
<feature type="turn" evidence="5">
    <location>
        <begin position="321"/>
        <end position="325"/>
    </location>
</feature>
<feature type="helix" evidence="5">
    <location>
        <begin position="326"/>
        <end position="339"/>
    </location>
</feature>
<feature type="strand" evidence="5">
    <location>
        <begin position="341"/>
        <end position="343"/>
    </location>
</feature>
<feature type="strand" evidence="5">
    <location>
        <begin position="346"/>
        <end position="354"/>
    </location>
</feature>
<feature type="helix" evidence="5">
    <location>
        <begin position="355"/>
        <end position="358"/>
    </location>
</feature>
<feature type="helix" evidence="5">
    <location>
        <begin position="362"/>
        <end position="372"/>
    </location>
</feature>
<feature type="helix" evidence="5">
    <location>
        <begin position="374"/>
        <end position="376"/>
    </location>
</feature>
<feature type="helix" evidence="5">
    <location>
        <begin position="386"/>
        <end position="393"/>
    </location>
</feature>
<feature type="strand" evidence="5">
    <location>
        <begin position="396"/>
        <end position="403"/>
    </location>
</feature>
<feature type="strand" evidence="5">
    <location>
        <begin position="406"/>
        <end position="417"/>
    </location>
</feature>
<feature type="strand" evidence="5">
    <location>
        <begin position="423"/>
        <end position="431"/>
    </location>
</feature>
<feature type="turn" evidence="5">
    <location>
        <begin position="432"/>
        <end position="435"/>
    </location>
</feature>
<feature type="strand" evidence="5">
    <location>
        <begin position="436"/>
        <end position="442"/>
    </location>
</feature>
<feature type="strand" evidence="5">
    <location>
        <begin position="445"/>
        <end position="451"/>
    </location>
</feature>
<feature type="strand" evidence="5">
    <location>
        <begin position="453"/>
        <end position="461"/>
    </location>
</feature>
<feature type="helix" evidence="5">
    <location>
        <begin position="466"/>
        <end position="476"/>
    </location>
</feature>
<feature type="strand" evidence="5">
    <location>
        <begin position="481"/>
        <end position="488"/>
    </location>
</feature>
<feature type="strand" evidence="5">
    <location>
        <begin position="490"/>
        <end position="493"/>
    </location>
</feature>
<feature type="strand" evidence="5">
    <location>
        <begin position="495"/>
        <end position="503"/>
    </location>
</feature>
<feature type="helix" evidence="5">
    <location>
        <begin position="507"/>
        <end position="517"/>
    </location>
</feature>
<feature type="strand" evidence="5">
    <location>
        <begin position="519"/>
        <end position="526"/>
    </location>
</feature>
<name>SERA_MYCTU</name>